<accession>Q9LUD9</accession>
<accession>F4IW70</accession>
<accession>Q38918</accession>
<accession>Q8GY09</accession>
<accession>Q8LBX9</accession>
<reference key="1">
    <citation type="journal article" date="2000" name="DNA Res.">
        <title>Structural analysis of Arabidopsis thaliana chromosome 3. I. Sequence features of the regions of 4,504,864 bp covered by sixty P1 and TAC clones.</title>
        <authorList>
            <person name="Sato S."/>
            <person name="Nakamura Y."/>
            <person name="Kaneko T."/>
            <person name="Katoh T."/>
            <person name="Asamizu E."/>
            <person name="Tabata S."/>
        </authorList>
    </citation>
    <scope>NUCLEOTIDE SEQUENCE [LARGE SCALE GENOMIC DNA]</scope>
    <source>
        <strain>cv. Columbia</strain>
    </source>
</reference>
<reference key="2">
    <citation type="journal article" date="2017" name="Plant J.">
        <title>Araport11: a complete reannotation of the Arabidopsis thaliana reference genome.</title>
        <authorList>
            <person name="Cheng C.Y."/>
            <person name="Krishnakumar V."/>
            <person name="Chan A.P."/>
            <person name="Thibaud-Nissen F."/>
            <person name="Schobel S."/>
            <person name="Town C.D."/>
        </authorList>
    </citation>
    <scope>GENOME REANNOTATION</scope>
    <scope>SEQUENCE REVISION</scope>
    <source>
        <strain>cv. Columbia</strain>
    </source>
</reference>
<reference key="3">
    <citation type="journal article" date="2002" name="Science">
        <title>Functional annotation of a full-length Arabidopsis cDNA collection.</title>
        <authorList>
            <person name="Seki M."/>
            <person name="Narusaka M."/>
            <person name="Kamiya A."/>
            <person name="Ishida J."/>
            <person name="Satou M."/>
            <person name="Sakurai T."/>
            <person name="Nakajima M."/>
            <person name="Enju A."/>
            <person name="Akiyama K."/>
            <person name="Oono Y."/>
            <person name="Muramatsu M."/>
            <person name="Hayashizaki Y."/>
            <person name="Kawai J."/>
            <person name="Carninci P."/>
            <person name="Itoh M."/>
            <person name="Ishii Y."/>
            <person name="Arakawa T."/>
            <person name="Shibata K."/>
            <person name="Shinagawa A."/>
            <person name="Shinozaki K."/>
        </authorList>
    </citation>
    <scope>NUCLEOTIDE SEQUENCE [LARGE SCALE MRNA]</scope>
    <source>
        <strain>cv. Columbia</strain>
    </source>
</reference>
<reference key="4">
    <citation type="submission" date="2002-03" db="EMBL/GenBank/DDBJ databases">
        <title>Full-length cDNA from Arabidopsis thaliana.</title>
        <authorList>
            <person name="Brover V.V."/>
            <person name="Troukhan M.E."/>
            <person name="Alexandrov N.A."/>
            <person name="Lu Y.-P."/>
            <person name="Flavell R.B."/>
            <person name="Feldmann K.A."/>
        </authorList>
    </citation>
    <scope>NUCLEOTIDE SEQUENCE [LARGE SCALE MRNA]</scope>
</reference>
<reference key="5">
    <citation type="online journal article" date="1996" name="Plant Gene Register">
        <title>Two more members of an Arabidopsis geranylgeranyl pyrophosphate synthase gene family.</title>
        <authorList>
            <person name="Scolnik P.A."/>
            <person name="Bartley G.E."/>
        </authorList>
        <locator>PGR96-014</locator>
    </citation>
    <scope>NUCLEOTIDE SEQUENCE [MRNA] OF 139-360</scope>
    <source>
        <strain>cv. Landsberg erecta</strain>
        <tissue>Flower</tissue>
    </source>
</reference>
<reference key="6">
    <citation type="journal article" date="2000" name="Plant Physiol.">
        <title>Five geranylgeranyl diphosphate synthases expressed in different organs are localized into three subcellular compartments in Arabidopsis.</title>
        <authorList>
            <person name="Okada K."/>
            <person name="Saito T."/>
            <person name="Nakagawa T."/>
            <person name="Kawamukai M."/>
            <person name="Kamiya Y."/>
        </authorList>
    </citation>
    <scope>SUBCELLULAR LOCATION</scope>
    <scope>TISSUE SPECIFICITY</scope>
</reference>
<evidence type="ECO:0000250" key="1"/>
<evidence type="ECO:0000250" key="2">
    <source>
        <dbReference type="UniProtKB" id="P14324"/>
    </source>
</evidence>
<evidence type="ECO:0000250" key="3">
    <source>
        <dbReference type="UniProtKB" id="Q12051"/>
    </source>
</evidence>
<evidence type="ECO:0000255" key="4"/>
<evidence type="ECO:0000256" key="5">
    <source>
        <dbReference type="SAM" id="MobiDB-lite"/>
    </source>
</evidence>
<evidence type="ECO:0000269" key="6">
    <source>
    </source>
</evidence>
<evidence type="ECO:0000305" key="7"/>
<evidence type="ECO:0007829" key="8">
    <source>
        <dbReference type="PDB" id="5E8H"/>
    </source>
</evidence>
<gene>
    <name type="primary">GGPP3</name>
    <name type="ordered locus">At3g14550</name>
    <name type="ORF">MIE1.5</name>
</gene>
<keyword id="KW-0002">3D-structure</keyword>
<keyword id="KW-0125">Carotenoid biosynthesis</keyword>
<keyword id="KW-0150">Chloroplast</keyword>
<keyword id="KW-0414">Isoprene biosynthesis</keyword>
<keyword id="KW-0460">Magnesium</keyword>
<keyword id="KW-0479">Metal-binding</keyword>
<keyword id="KW-0934">Plastid</keyword>
<keyword id="KW-1185">Reference proteome</keyword>
<keyword id="KW-0808">Transferase</keyword>
<keyword id="KW-0809">Transit peptide</keyword>
<comment type="function">
    <text>Catalyzes the trans-addition of the three molecules of IPP onto DMAPP to form geranylgeranyl pyrophosphate.</text>
</comment>
<comment type="catalytic activity">
    <reaction>
        <text>isopentenyl diphosphate + dimethylallyl diphosphate = (2E)-geranyl diphosphate + diphosphate</text>
        <dbReference type="Rhea" id="RHEA:22408"/>
        <dbReference type="ChEBI" id="CHEBI:33019"/>
        <dbReference type="ChEBI" id="CHEBI:57623"/>
        <dbReference type="ChEBI" id="CHEBI:58057"/>
        <dbReference type="ChEBI" id="CHEBI:128769"/>
        <dbReference type="EC" id="2.5.1.1"/>
    </reaction>
</comment>
<comment type="catalytic activity">
    <reaction>
        <text>isopentenyl diphosphate + (2E)-geranyl diphosphate = (2E,6E)-farnesyl diphosphate + diphosphate</text>
        <dbReference type="Rhea" id="RHEA:19361"/>
        <dbReference type="ChEBI" id="CHEBI:33019"/>
        <dbReference type="ChEBI" id="CHEBI:58057"/>
        <dbReference type="ChEBI" id="CHEBI:128769"/>
        <dbReference type="ChEBI" id="CHEBI:175763"/>
        <dbReference type="EC" id="2.5.1.10"/>
    </reaction>
</comment>
<comment type="catalytic activity">
    <reaction>
        <text>isopentenyl diphosphate + (2E,6E)-farnesyl diphosphate = (2E,6E,10E)-geranylgeranyl diphosphate + diphosphate</text>
        <dbReference type="Rhea" id="RHEA:17653"/>
        <dbReference type="ChEBI" id="CHEBI:33019"/>
        <dbReference type="ChEBI" id="CHEBI:58756"/>
        <dbReference type="ChEBI" id="CHEBI:128769"/>
        <dbReference type="ChEBI" id="CHEBI:175763"/>
        <dbReference type="EC" id="2.5.1.29"/>
    </reaction>
</comment>
<comment type="cofactor">
    <cofactor evidence="1">
        <name>Mg(2+)</name>
        <dbReference type="ChEBI" id="CHEBI:18420"/>
    </cofactor>
    <text evidence="1">Binds 2 Mg(2+) ions per subunit.</text>
</comment>
<comment type="pathway">
    <text>Isoprenoid biosynthesis; farnesyl diphosphate biosynthesis; farnesyl diphosphate from geranyl diphosphate and isopentenyl diphosphate: step 1/1.</text>
</comment>
<comment type="pathway">
    <text>Isoprenoid biosynthesis; geranyl diphosphate biosynthesis; geranyl diphosphate from dimethylallyl diphosphate and isopentenyl diphosphate: step 1/1.</text>
</comment>
<comment type="pathway">
    <text>Isoprenoid biosynthesis; geranylgeranyl diphosphate biosynthesis; geranylgeranyl diphosphate from farnesyl diphosphate and isopentenyl diphosphate: step 1/1.</text>
</comment>
<comment type="subunit">
    <text evidence="1">Monomer.</text>
</comment>
<comment type="subcellular location">
    <subcellularLocation>
        <location evidence="6">Plastid</location>
        <location evidence="6">Chloroplast</location>
    </subcellularLocation>
</comment>
<comment type="tissue specificity">
    <text evidence="6">Mainly expressed in roots.</text>
</comment>
<comment type="similarity">
    <text evidence="7">Belongs to the FPP/GGPP synthase family.</text>
</comment>
<feature type="transit peptide" description="Chloroplast" evidence="4">
    <location>
        <begin position="1"/>
        <end position="39"/>
    </location>
</feature>
<feature type="chain" id="PRO_0000045403" description="Geranylgeranyl pyrophosphate synthase 3, chloroplastic">
    <location>
        <begin position="40"/>
        <end position="360"/>
    </location>
</feature>
<feature type="region of interest" description="Disordered" evidence="5">
    <location>
        <begin position="24"/>
        <end position="54"/>
    </location>
</feature>
<feature type="compositionally biased region" description="Polar residues" evidence="5">
    <location>
        <begin position="36"/>
        <end position="46"/>
    </location>
</feature>
<feature type="binding site" evidence="2">
    <location>
        <position position="106"/>
    </location>
    <ligand>
        <name>isopentenyl diphosphate</name>
        <dbReference type="ChEBI" id="CHEBI:128769"/>
    </ligand>
</feature>
<feature type="binding site" evidence="2">
    <location>
        <position position="109"/>
    </location>
    <ligand>
        <name>isopentenyl diphosphate</name>
        <dbReference type="ChEBI" id="CHEBI:128769"/>
    </ligand>
</feature>
<feature type="binding site" evidence="3">
    <location>
        <position position="138"/>
    </location>
    <ligand>
        <name>isopentenyl diphosphate</name>
        <dbReference type="ChEBI" id="CHEBI:128769"/>
    </ligand>
</feature>
<feature type="binding site" evidence="2">
    <location>
        <position position="145"/>
    </location>
    <ligand>
        <name>Mg(2+)</name>
        <dbReference type="ChEBI" id="CHEBI:18420"/>
        <label>1</label>
    </ligand>
</feature>
<feature type="binding site" evidence="2">
    <location>
        <position position="145"/>
    </location>
    <ligand>
        <name>Mg(2+)</name>
        <dbReference type="ChEBI" id="CHEBI:18420"/>
        <label>2</label>
    </ligand>
</feature>
<feature type="binding site" evidence="2">
    <location>
        <position position="151"/>
    </location>
    <ligand>
        <name>Mg(2+)</name>
        <dbReference type="ChEBI" id="CHEBI:18420"/>
        <label>1</label>
    </ligand>
</feature>
<feature type="binding site" evidence="2">
    <location>
        <position position="151"/>
    </location>
    <ligand>
        <name>Mg(2+)</name>
        <dbReference type="ChEBI" id="CHEBI:18420"/>
        <label>2</label>
    </ligand>
</feature>
<feature type="binding site" evidence="1">
    <location>
        <position position="156"/>
    </location>
    <ligand>
        <name>dimethylallyl diphosphate</name>
        <dbReference type="ChEBI" id="CHEBI:57623"/>
    </ligand>
</feature>
<feature type="binding site" evidence="2">
    <location>
        <position position="157"/>
    </location>
    <ligand>
        <name>isopentenyl diphosphate</name>
        <dbReference type="ChEBI" id="CHEBI:128769"/>
    </ligand>
</feature>
<feature type="binding site" evidence="1">
    <location>
        <position position="245"/>
    </location>
    <ligand>
        <name>dimethylallyl diphosphate</name>
        <dbReference type="ChEBI" id="CHEBI:57623"/>
    </ligand>
</feature>
<feature type="binding site" evidence="1">
    <location>
        <position position="246"/>
    </location>
    <ligand>
        <name>dimethylallyl diphosphate</name>
        <dbReference type="ChEBI" id="CHEBI:57623"/>
    </ligand>
</feature>
<feature type="binding site" evidence="1">
    <location>
        <position position="283"/>
    </location>
    <ligand>
        <name>dimethylallyl diphosphate</name>
        <dbReference type="ChEBI" id="CHEBI:57623"/>
    </ligand>
</feature>
<feature type="binding site" evidence="1">
    <location>
        <position position="300"/>
    </location>
    <ligand>
        <name>dimethylallyl diphosphate</name>
        <dbReference type="ChEBI" id="CHEBI:57623"/>
    </ligand>
</feature>
<feature type="binding site" evidence="1">
    <location>
        <position position="310"/>
    </location>
    <ligand>
        <name>dimethylallyl diphosphate</name>
        <dbReference type="ChEBI" id="CHEBI:57623"/>
    </ligand>
</feature>
<feature type="sequence conflict" description="In Ref. 3; BAC42571." evidence="7" ref="3">
    <original>S</original>
    <variation>N</variation>
    <location>
        <position position="8"/>
    </location>
</feature>
<feature type="sequence conflict" description="In Ref. 4; AAM64496." evidence="7" ref="4">
    <original>G</original>
    <variation>R</variation>
    <location>
        <position position="55"/>
    </location>
</feature>
<feature type="sequence conflict" description="In Ref. 2; AEE75537." evidence="7" ref="2">
    <original>V</original>
    <variation>F</variation>
    <location>
        <position position="188"/>
    </location>
</feature>
<feature type="sequence conflict" description="In Ref. 3; BAC42571." evidence="7" ref="3">
    <original>A</original>
    <variation>T</variation>
    <location>
        <position position="209"/>
    </location>
</feature>
<feature type="sequence conflict" description="In Ref. 4; AAM64496." evidence="7" ref="4">
    <original>L</original>
    <variation>P</variation>
    <location>
        <position position="289"/>
    </location>
</feature>
<feature type="sequence conflict" description="In Ref. 4; AAM64496." evidence="7" ref="4">
    <original>K</original>
    <variation>E</variation>
    <location>
        <position position="328"/>
    </location>
</feature>
<feature type="sequence conflict" description="In Ref. 5; AAB67731." evidence="7" ref="5">
    <original>Y</original>
    <variation>H</variation>
    <location>
        <position position="354"/>
    </location>
</feature>
<feature type="sequence conflict" description="In Ref. 5; AAB67731." evidence="7" ref="5">
    <original>C</original>
    <variation>F</variation>
    <location>
        <position position="357"/>
    </location>
</feature>
<feature type="helix" evidence="8">
    <location>
        <begin position="60"/>
        <end position="84"/>
    </location>
</feature>
<feature type="helix" evidence="8">
    <location>
        <begin position="91"/>
        <end position="101"/>
    </location>
</feature>
<feature type="helix" evidence="8">
    <location>
        <begin position="108"/>
        <end position="119"/>
    </location>
</feature>
<feature type="helix" evidence="8">
    <location>
        <begin position="124"/>
        <end position="146"/>
    </location>
</feature>
<feature type="turn" evidence="8">
    <location>
        <begin position="148"/>
        <end position="151"/>
    </location>
</feature>
<feature type="strand" evidence="8">
    <location>
        <begin position="154"/>
        <end position="156"/>
    </location>
</feature>
<feature type="helix" evidence="8">
    <location>
        <begin position="162"/>
        <end position="166"/>
    </location>
</feature>
<feature type="helix" evidence="8">
    <location>
        <begin position="168"/>
        <end position="190"/>
    </location>
</feature>
<feature type="turn" evidence="8">
    <location>
        <begin position="191"/>
        <end position="193"/>
    </location>
</feature>
<feature type="helix" evidence="8">
    <location>
        <begin position="196"/>
        <end position="210"/>
    </location>
</feature>
<feature type="helix" evidence="8">
    <location>
        <begin position="215"/>
        <end position="221"/>
    </location>
</feature>
<feature type="helix" evidence="8">
    <location>
        <begin position="235"/>
        <end position="245"/>
    </location>
</feature>
<feature type="helix" evidence="8">
    <location>
        <begin position="247"/>
        <end position="260"/>
    </location>
</feature>
<feature type="helix" evidence="8">
    <location>
        <begin position="265"/>
        <end position="293"/>
    </location>
</feature>
<feature type="helix" evidence="8">
    <location>
        <begin position="313"/>
        <end position="316"/>
    </location>
</feature>
<feature type="helix" evidence="8">
    <location>
        <begin position="319"/>
        <end position="335"/>
    </location>
</feature>
<feature type="turn" evidence="8">
    <location>
        <begin position="336"/>
        <end position="339"/>
    </location>
</feature>
<feature type="helix" evidence="8">
    <location>
        <begin position="342"/>
        <end position="356"/>
    </location>
</feature>
<protein>
    <recommendedName>
        <fullName>Geranylgeranyl pyrophosphate synthase 3, chloroplastic</fullName>
        <shortName>GGPP synthase 3</shortName>
        <shortName>GGPS3</shortName>
        <ecNumber>2.5.1.-</ecNumber>
    </recommendedName>
    <alternativeName>
        <fullName>(2E,6E)-farnesyl diphosphate synthase 3</fullName>
    </alternativeName>
    <alternativeName>
        <fullName>Dimethylallyltranstransferase 3</fullName>
        <ecNumber>2.5.1.1</ecNumber>
    </alternativeName>
    <alternativeName>
        <fullName>Farnesyl diphosphate synthase 3</fullName>
    </alternativeName>
    <alternativeName>
        <fullName>Farnesyltranstransferase 3</fullName>
        <ecNumber>2.5.1.29</ecNumber>
    </alternativeName>
    <alternativeName>
        <fullName>Geranyltranstransferase 3</fullName>
        <ecNumber>2.5.1.10</ecNumber>
    </alternativeName>
</protein>
<organism>
    <name type="scientific">Arabidopsis thaliana</name>
    <name type="common">Mouse-ear cress</name>
    <dbReference type="NCBI Taxonomy" id="3702"/>
    <lineage>
        <taxon>Eukaryota</taxon>
        <taxon>Viridiplantae</taxon>
        <taxon>Streptophyta</taxon>
        <taxon>Embryophyta</taxon>
        <taxon>Tracheophyta</taxon>
        <taxon>Spermatophyta</taxon>
        <taxon>Magnoliopsida</taxon>
        <taxon>eudicotyledons</taxon>
        <taxon>Gunneridae</taxon>
        <taxon>Pentapetalae</taxon>
        <taxon>rosids</taxon>
        <taxon>malvids</taxon>
        <taxon>Brassicales</taxon>
        <taxon>Brassicaceae</taxon>
        <taxon>Camelineae</taxon>
        <taxon>Arabidopsis</taxon>
    </lineage>
</organism>
<name>GGPP3_ARATH</name>
<dbReference type="EC" id="2.5.1.-"/>
<dbReference type="EC" id="2.5.1.1"/>
<dbReference type="EC" id="2.5.1.29"/>
<dbReference type="EC" id="2.5.1.10"/>
<dbReference type="EMBL" id="AB023038">
    <property type="protein sequence ID" value="BAB02387.1"/>
    <property type="molecule type" value="Genomic_DNA"/>
</dbReference>
<dbReference type="EMBL" id="CP002686">
    <property type="protein sequence ID" value="AEE75537.1"/>
    <property type="molecule type" value="Genomic_DNA"/>
</dbReference>
<dbReference type="EMBL" id="AK117933">
    <property type="protein sequence ID" value="BAC42571.1"/>
    <property type="molecule type" value="mRNA"/>
</dbReference>
<dbReference type="EMBL" id="AY086932">
    <property type="protein sequence ID" value="AAM64496.1"/>
    <property type="molecule type" value="mRNA"/>
</dbReference>
<dbReference type="EMBL" id="U44877">
    <property type="protein sequence ID" value="AAB67731.1"/>
    <property type="molecule type" value="mRNA"/>
</dbReference>
<dbReference type="PIR" id="S71231">
    <property type="entry name" value="S71231"/>
</dbReference>
<dbReference type="PDB" id="5E8H">
    <property type="method" value="X-ray"/>
    <property type="resolution" value="2.30 A"/>
    <property type="chains" value="A/B=40-360"/>
</dbReference>
<dbReference type="PDBsum" id="5E8H"/>
<dbReference type="SMR" id="Q9LUD9"/>
<dbReference type="FunCoup" id="Q9LUD9">
    <property type="interactions" value="18"/>
</dbReference>
<dbReference type="STRING" id="3702.Q9LUD9"/>
<dbReference type="PaxDb" id="3702-AT3G14550.1"/>
<dbReference type="KEGG" id="ath:AT3G14550"/>
<dbReference type="Araport" id="AT3G14550"/>
<dbReference type="TAIR" id="AT3G14550">
    <property type="gene designation" value="GGPS3"/>
</dbReference>
<dbReference type="eggNOG" id="KOG0776">
    <property type="taxonomic scope" value="Eukaryota"/>
</dbReference>
<dbReference type="HOGENOM" id="CLU_014015_0_0_1"/>
<dbReference type="InParanoid" id="Q9LUD9"/>
<dbReference type="PhylomeDB" id="Q9LUD9"/>
<dbReference type="BioCyc" id="MetaCyc:AT3G14550-MONOMER"/>
<dbReference type="BRENDA" id="2.5.1.81">
    <property type="organism ID" value="399"/>
</dbReference>
<dbReference type="UniPathway" id="UPA00259">
    <property type="reaction ID" value="UER00368"/>
</dbReference>
<dbReference type="UniPathway" id="UPA00260">
    <property type="reaction ID" value="UER00369"/>
</dbReference>
<dbReference type="UniPathway" id="UPA00389">
    <property type="reaction ID" value="UER00564"/>
</dbReference>
<dbReference type="EvolutionaryTrace" id="Q9LUD9"/>
<dbReference type="PRO" id="PR:Q9LUD9"/>
<dbReference type="Proteomes" id="UP000006548">
    <property type="component" value="Chromosome 3"/>
</dbReference>
<dbReference type="ExpressionAtlas" id="Q9LUD9">
    <property type="expression patterns" value="baseline and differential"/>
</dbReference>
<dbReference type="GO" id="GO:0009507">
    <property type="term" value="C:chloroplast"/>
    <property type="evidence" value="ECO:0007669"/>
    <property type="project" value="UniProtKB-SubCell"/>
</dbReference>
<dbReference type="GO" id="GO:0004337">
    <property type="term" value="F:(2E,6E)-farnesyl diphosphate synthase activity"/>
    <property type="evidence" value="ECO:0007669"/>
    <property type="project" value="UniProtKB-EC"/>
</dbReference>
<dbReference type="GO" id="GO:0004161">
    <property type="term" value="F:dimethylallyltranstransferase activity"/>
    <property type="evidence" value="ECO:0007669"/>
    <property type="project" value="UniProtKB-EC"/>
</dbReference>
<dbReference type="GO" id="GO:0004311">
    <property type="term" value="F:geranylgeranyl diphosphate synthase activity"/>
    <property type="evidence" value="ECO:0000318"/>
    <property type="project" value="GO_Central"/>
</dbReference>
<dbReference type="GO" id="GO:0046872">
    <property type="term" value="F:metal ion binding"/>
    <property type="evidence" value="ECO:0007669"/>
    <property type="project" value="UniProtKB-KW"/>
</dbReference>
<dbReference type="GO" id="GO:0016117">
    <property type="term" value="P:carotenoid biosynthetic process"/>
    <property type="evidence" value="ECO:0007669"/>
    <property type="project" value="UniProtKB-KW"/>
</dbReference>
<dbReference type="GO" id="GO:0045337">
    <property type="term" value="P:farnesyl diphosphate biosynthetic process"/>
    <property type="evidence" value="ECO:0007669"/>
    <property type="project" value="UniProtKB-UniPathway"/>
</dbReference>
<dbReference type="GO" id="GO:0033384">
    <property type="term" value="P:geranyl diphosphate biosynthetic process"/>
    <property type="evidence" value="ECO:0007669"/>
    <property type="project" value="UniProtKB-UniPathway"/>
</dbReference>
<dbReference type="GO" id="GO:0033386">
    <property type="term" value="P:geranylgeranyl diphosphate biosynthetic process"/>
    <property type="evidence" value="ECO:0007669"/>
    <property type="project" value="UniProtKB-UniPathway"/>
</dbReference>
<dbReference type="CDD" id="cd00685">
    <property type="entry name" value="Trans_IPPS_HT"/>
    <property type="match status" value="1"/>
</dbReference>
<dbReference type="FunFam" id="1.10.600.10:FF:000001">
    <property type="entry name" value="Geranylgeranyl diphosphate synthase"/>
    <property type="match status" value="1"/>
</dbReference>
<dbReference type="Gene3D" id="1.10.600.10">
    <property type="entry name" value="Farnesyl Diphosphate Synthase"/>
    <property type="match status" value="1"/>
</dbReference>
<dbReference type="InterPro" id="IPR008949">
    <property type="entry name" value="Isoprenoid_synthase_dom_sf"/>
</dbReference>
<dbReference type="InterPro" id="IPR000092">
    <property type="entry name" value="Polyprenyl_synt"/>
</dbReference>
<dbReference type="InterPro" id="IPR033749">
    <property type="entry name" value="Polyprenyl_synt_CS"/>
</dbReference>
<dbReference type="InterPro" id="IPR053378">
    <property type="entry name" value="Prenyl_diphosphate_synthase"/>
</dbReference>
<dbReference type="NCBIfam" id="NF045485">
    <property type="entry name" value="FPPsyn"/>
    <property type="match status" value="1"/>
</dbReference>
<dbReference type="PANTHER" id="PTHR43281">
    <property type="entry name" value="FARNESYL DIPHOSPHATE SYNTHASE"/>
    <property type="match status" value="1"/>
</dbReference>
<dbReference type="PANTHER" id="PTHR43281:SF11">
    <property type="entry name" value="GERANYLGERANYL PYROPHOSPHATE SYNTHASE 11, CHLOROPLASTIC-RELATED"/>
    <property type="match status" value="1"/>
</dbReference>
<dbReference type="Pfam" id="PF00348">
    <property type="entry name" value="polyprenyl_synt"/>
    <property type="match status" value="1"/>
</dbReference>
<dbReference type="SFLD" id="SFLDS00005">
    <property type="entry name" value="Isoprenoid_Synthase_Type_I"/>
    <property type="match status" value="1"/>
</dbReference>
<dbReference type="SFLD" id="SFLDG01017">
    <property type="entry name" value="Polyprenyl_Transferase_Like"/>
    <property type="match status" value="1"/>
</dbReference>
<dbReference type="SUPFAM" id="SSF48576">
    <property type="entry name" value="Terpenoid synthases"/>
    <property type="match status" value="1"/>
</dbReference>
<dbReference type="PROSITE" id="PS00723">
    <property type="entry name" value="POLYPRENYL_SYNTHASE_1"/>
    <property type="match status" value="1"/>
</dbReference>
<dbReference type="PROSITE" id="PS00444">
    <property type="entry name" value="POLYPRENYL_SYNTHASE_2"/>
    <property type="match status" value="1"/>
</dbReference>
<sequence length="360" mass="38844">MATTVHLSSFSLFIQSRGRRDNSISSVKSLKKRTGLSPSSALTSQGGRDMIPPEGKCNDHNSAFDFKLYMIRKAESVNAALDVSVPLREPLTVQEAVRYSLLAGGKRVRPLLCIAVCELVGGDEATAMSAACAVEMIHTSSLIHDDLPCMDNADLRRGKPTNHKVYGEDMAVLAGDALLALAFEHMTVVSSGLVAPERMIRAVVELARAIGTTGLVAGQMIDLASERLNPDKVGLEHLEFIHLHKTAALLEAAAVLGVIMGGGTEEEIEKLRKYARCIGLLFQVVDDILDVTKSTEELGKTAGKDVMAGKLTYPRLIGLERSKEVAEKLRREAEEQLLGFDPSKAAPLVALASYIACRHN</sequence>
<proteinExistence type="evidence at protein level"/>